<accession>Q9Z8M9</accession>
<accession>Q9JSG4</accession>
<comment type="function">
    <text evidence="1">Plays an essential role in the initiation and regulation of chromosomal replication. ATP-DnaA binds to the origin of replication (oriC) to initiate formation of the DNA replication initiation complex once per cell cycle. Binds the DnaA box (a 9 base pair repeat at the origin) and separates the double-stranded (ds)DNA. Forms a right-handed helical filament on oriC DNA; dsDNA binds to the exterior of the filament while single-stranded (ss)DNA is stabiized in the filament's interior. The ATP-DnaA-oriC complex binds and stabilizes one strand of the AT-rich DNA unwinding element (DUE), permitting loading of DNA polymerase. After initiation quickly degrades to an ADP-DnaA complex that is not apt for DNA replication. Binds acidic phospholipids.</text>
</comment>
<comment type="subunit">
    <text evidence="1">Oligomerizes as a right-handed, spiral filament on DNA at oriC.</text>
</comment>
<comment type="subcellular location">
    <subcellularLocation>
        <location evidence="1">Cytoplasm</location>
    </subcellularLocation>
</comment>
<comment type="domain">
    <text evidence="1">Domain I is involved in oligomerization and binding regulators, domain II is flexibile and of varying length in different bacteria, domain III forms the AAA+ region, while domain IV binds dsDNA.</text>
</comment>
<comment type="similarity">
    <text evidence="1">Belongs to the DnaA family.</text>
</comment>
<feature type="chain" id="PRO_0000114159" description="Chromosomal replication initiator protein DnaA 1">
    <location>
        <begin position="1"/>
        <end position="460"/>
    </location>
</feature>
<feature type="region of interest" description="Domain I, interacts with DnaA modulators" evidence="1">
    <location>
        <begin position="1"/>
        <end position="68"/>
    </location>
</feature>
<feature type="region of interest" description="Domain II" evidence="1">
    <location>
        <begin position="68"/>
        <end position="102"/>
    </location>
</feature>
<feature type="region of interest" description="Domain III, AAA+ region" evidence="1">
    <location>
        <begin position="103"/>
        <end position="321"/>
    </location>
</feature>
<feature type="region of interest" description="Domain IV, binds dsDNA" evidence="1">
    <location>
        <begin position="322"/>
        <end position="460"/>
    </location>
</feature>
<feature type="binding site" evidence="1">
    <location>
        <position position="151"/>
    </location>
    <ligand>
        <name>ATP</name>
        <dbReference type="ChEBI" id="CHEBI:30616"/>
    </ligand>
</feature>
<feature type="binding site" evidence="1">
    <location>
        <position position="153"/>
    </location>
    <ligand>
        <name>ATP</name>
        <dbReference type="ChEBI" id="CHEBI:30616"/>
    </ligand>
</feature>
<feature type="binding site" evidence="1">
    <location>
        <position position="154"/>
    </location>
    <ligand>
        <name>ATP</name>
        <dbReference type="ChEBI" id="CHEBI:30616"/>
    </ligand>
</feature>
<feature type="binding site" evidence="1">
    <location>
        <position position="155"/>
    </location>
    <ligand>
        <name>ATP</name>
        <dbReference type="ChEBI" id="CHEBI:30616"/>
    </ligand>
</feature>
<reference key="1">
    <citation type="journal article" date="1999" name="Nat. Genet.">
        <title>Comparative genomes of Chlamydia pneumoniae and C. trachomatis.</title>
        <authorList>
            <person name="Kalman S."/>
            <person name="Mitchell W.P."/>
            <person name="Marathe R."/>
            <person name="Lammel C.J."/>
            <person name="Fan J."/>
            <person name="Hyman R.W."/>
            <person name="Olinger L."/>
            <person name="Grimwood J."/>
            <person name="Davis R.W."/>
            <person name="Stephens R.S."/>
        </authorList>
    </citation>
    <scope>NUCLEOTIDE SEQUENCE [LARGE SCALE GENOMIC DNA]</scope>
    <source>
        <strain>CWL029</strain>
    </source>
</reference>
<reference key="2">
    <citation type="journal article" date="2000" name="Nucleic Acids Res.">
        <title>Genome sequences of Chlamydia trachomatis MoPn and Chlamydia pneumoniae AR39.</title>
        <authorList>
            <person name="Read T.D."/>
            <person name="Brunham R.C."/>
            <person name="Shen C."/>
            <person name="Gill S.R."/>
            <person name="Heidelberg J.F."/>
            <person name="White O."/>
            <person name="Hickey E.K."/>
            <person name="Peterson J.D."/>
            <person name="Utterback T.R."/>
            <person name="Berry K.J."/>
            <person name="Bass S."/>
            <person name="Linher K.D."/>
            <person name="Weidman J.F."/>
            <person name="Khouri H.M."/>
            <person name="Craven B."/>
            <person name="Bowman C."/>
            <person name="Dodson R.J."/>
            <person name="Gwinn M.L."/>
            <person name="Nelson W.C."/>
            <person name="DeBoy R.T."/>
            <person name="Kolonay J.F."/>
            <person name="McClarty G."/>
            <person name="Salzberg S.L."/>
            <person name="Eisen J.A."/>
            <person name="Fraser C.M."/>
        </authorList>
    </citation>
    <scope>NUCLEOTIDE SEQUENCE [LARGE SCALE GENOMIC DNA]</scope>
    <source>
        <strain>AR39</strain>
    </source>
</reference>
<reference key="3">
    <citation type="journal article" date="2000" name="Nucleic Acids Res.">
        <title>Comparison of whole genome sequences of Chlamydia pneumoniae J138 from Japan and CWL029 from USA.</title>
        <authorList>
            <person name="Shirai M."/>
            <person name="Hirakawa H."/>
            <person name="Kimoto M."/>
            <person name="Tabuchi M."/>
            <person name="Kishi F."/>
            <person name="Ouchi K."/>
            <person name="Shiba T."/>
            <person name="Ishii K."/>
            <person name="Hattori M."/>
            <person name="Kuhara S."/>
            <person name="Nakazawa T."/>
        </authorList>
    </citation>
    <scope>NUCLEOTIDE SEQUENCE [LARGE SCALE GENOMIC DNA]</scope>
    <source>
        <strain>J138</strain>
    </source>
</reference>
<reference key="4">
    <citation type="submission" date="2002-05" db="EMBL/GenBank/DDBJ databases">
        <title>The genome sequence of Chlamydia pneumoniae TW183 and comparison with other Chlamydia strains based on whole genome sequence analysis.</title>
        <authorList>
            <person name="Geng M.M."/>
            <person name="Schuhmacher A."/>
            <person name="Muehldorfer I."/>
            <person name="Bensch K.W."/>
            <person name="Schaefer K.P."/>
            <person name="Schneider S."/>
            <person name="Pohl T."/>
            <person name="Essig A."/>
            <person name="Marre R."/>
            <person name="Melchers K."/>
        </authorList>
    </citation>
    <scope>NUCLEOTIDE SEQUENCE [LARGE SCALE GENOMIC DNA]</scope>
    <source>
        <strain>TW-183</strain>
    </source>
</reference>
<sequence>MRAWEEFLLLQEKEIGTNTVDKWLRSLKVLCFDACNLYLEAQDSFQITWFEEHIRHKVKSGLVNNNNKPIRVHVTSVDKAAPFYKEKQMQQEKTAYFTMHYGSVNPEMTFSNFLVTPENDLPFRVLQEFTKSPDENGGVTFNPIYLFGPEGSGKTHLMQSAISVLRESGGKILYVSSDLFTEHLVSAIRSGEMQKFRSFYRNIDALFIEDIEVFSGKSATQEEFFHTFNSLHSEGKLIVVSSSYAPVDLVAVEDRLISRFEWGVAIPIHPLVQEGLRSFLMRQVERLSIRIQETALDFLIYALSSNVKTLLHALNLLAKRVMYKKLSHQLLYEDDVKTLLKDVLEAAGSVRLTPLKIIRNVAQYYGVSQESILGRSQSREYVLPRQVAMYFCRQKLSLSYVRIGDVFSRDHSTVISSIRLIEQKIEENSHDIHMAIQDISKNLNSLHKSLEFFPSEEMII</sequence>
<gene>
    <name evidence="1" type="primary">dnaA1</name>
    <name type="synonym">dnaA</name>
    <name type="ordered locus">CPn_0309</name>
    <name type="ordered locus">CP_0449</name>
    <name type="ordered locus">CpB0317</name>
</gene>
<organism>
    <name type="scientific">Chlamydia pneumoniae</name>
    <name type="common">Chlamydophila pneumoniae</name>
    <dbReference type="NCBI Taxonomy" id="83558"/>
    <lineage>
        <taxon>Bacteria</taxon>
        <taxon>Pseudomonadati</taxon>
        <taxon>Chlamydiota</taxon>
        <taxon>Chlamydiia</taxon>
        <taxon>Chlamydiales</taxon>
        <taxon>Chlamydiaceae</taxon>
        <taxon>Chlamydia/Chlamydophila group</taxon>
        <taxon>Chlamydia</taxon>
    </lineage>
</organism>
<name>DNAA1_CHLPN</name>
<evidence type="ECO:0000255" key="1">
    <source>
        <dbReference type="HAMAP-Rule" id="MF_00377"/>
    </source>
</evidence>
<proteinExistence type="inferred from homology"/>
<protein>
    <recommendedName>
        <fullName evidence="1">Chromosomal replication initiator protein DnaA 1</fullName>
    </recommendedName>
</protein>
<keyword id="KW-0067">ATP-binding</keyword>
<keyword id="KW-0963">Cytoplasm</keyword>
<keyword id="KW-0235">DNA replication</keyword>
<keyword id="KW-0238">DNA-binding</keyword>
<keyword id="KW-0446">Lipid-binding</keyword>
<keyword id="KW-0547">Nucleotide-binding</keyword>
<dbReference type="EMBL" id="AE001363">
    <property type="protein sequence ID" value="AAD18458.1"/>
    <property type="molecule type" value="Genomic_DNA"/>
</dbReference>
<dbReference type="EMBL" id="AE002161">
    <property type="protein sequence ID" value="AAF38287.1"/>
    <property type="molecule type" value="Genomic_DNA"/>
</dbReference>
<dbReference type="EMBL" id="BA000008">
    <property type="protein sequence ID" value="BAA98519.1"/>
    <property type="molecule type" value="Genomic_DNA"/>
</dbReference>
<dbReference type="EMBL" id="AE009440">
    <property type="protein sequence ID" value="AAP98251.1"/>
    <property type="molecule type" value="Genomic_DNA"/>
</dbReference>
<dbReference type="PIR" id="E86529">
    <property type="entry name" value="E86529"/>
</dbReference>
<dbReference type="PIR" id="F72092">
    <property type="entry name" value="F72092"/>
</dbReference>
<dbReference type="RefSeq" id="NP_224514.1">
    <property type="nucleotide sequence ID" value="NC_000922.1"/>
</dbReference>
<dbReference type="RefSeq" id="WP_010882957.1">
    <property type="nucleotide sequence ID" value="NZ_LN847257.1"/>
</dbReference>
<dbReference type="SMR" id="Q9Z8M9"/>
<dbReference type="STRING" id="406984.CPK_ORF00816"/>
<dbReference type="GeneID" id="45050358"/>
<dbReference type="KEGG" id="cpa:CP_0449"/>
<dbReference type="KEGG" id="cpj:dnaA_1"/>
<dbReference type="KEGG" id="cpn:CPn_0309"/>
<dbReference type="KEGG" id="cpt:CpB0317"/>
<dbReference type="PATRIC" id="fig|115713.3.peg.343"/>
<dbReference type="eggNOG" id="COG0593">
    <property type="taxonomic scope" value="Bacteria"/>
</dbReference>
<dbReference type="HOGENOM" id="CLU_026910_3_2_0"/>
<dbReference type="OrthoDB" id="19837at2"/>
<dbReference type="Proteomes" id="UP000000583">
    <property type="component" value="Chromosome"/>
</dbReference>
<dbReference type="Proteomes" id="UP000000801">
    <property type="component" value="Chromosome"/>
</dbReference>
<dbReference type="GO" id="GO:0005737">
    <property type="term" value="C:cytoplasm"/>
    <property type="evidence" value="ECO:0007669"/>
    <property type="project" value="UniProtKB-SubCell"/>
</dbReference>
<dbReference type="GO" id="GO:0005886">
    <property type="term" value="C:plasma membrane"/>
    <property type="evidence" value="ECO:0007669"/>
    <property type="project" value="TreeGrafter"/>
</dbReference>
<dbReference type="GO" id="GO:0005524">
    <property type="term" value="F:ATP binding"/>
    <property type="evidence" value="ECO:0007669"/>
    <property type="project" value="UniProtKB-UniRule"/>
</dbReference>
<dbReference type="GO" id="GO:0016887">
    <property type="term" value="F:ATP hydrolysis activity"/>
    <property type="evidence" value="ECO:0007669"/>
    <property type="project" value="InterPro"/>
</dbReference>
<dbReference type="GO" id="GO:0003688">
    <property type="term" value="F:DNA replication origin binding"/>
    <property type="evidence" value="ECO:0007669"/>
    <property type="project" value="UniProtKB-UniRule"/>
</dbReference>
<dbReference type="GO" id="GO:0008289">
    <property type="term" value="F:lipid binding"/>
    <property type="evidence" value="ECO:0007669"/>
    <property type="project" value="UniProtKB-KW"/>
</dbReference>
<dbReference type="GO" id="GO:0006270">
    <property type="term" value="P:DNA replication initiation"/>
    <property type="evidence" value="ECO:0007669"/>
    <property type="project" value="UniProtKB-UniRule"/>
</dbReference>
<dbReference type="GO" id="GO:0006275">
    <property type="term" value="P:regulation of DNA replication"/>
    <property type="evidence" value="ECO:0007669"/>
    <property type="project" value="UniProtKB-UniRule"/>
</dbReference>
<dbReference type="CDD" id="cd00009">
    <property type="entry name" value="AAA"/>
    <property type="match status" value="1"/>
</dbReference>
<dbReference type="CDD" id="cd06571">
    <property type="entry name" value="Bac_DnaA_C"/>
    <property type="match status" value="1"/>
</dbReference>
<dbReference type="Gene3D" id="1.10.1750.10">
    <property type="match status" value="1"/>
</dbReference>
<dbReference type="Gene3D" id="3.30.300.180">
    <property type="match status" value="1"/>
</dbReference>
<dbReference type="Gene3D" id="3.40.50.300">
    <property type="entry name" value="P-loop containing nucleotide triphosphate hydrolases"/>
    <property type="match status" value="1"/>
</dbReference>
<dbReference type="HAMAP" id="MF_00377">
    <property type="entry name" value="DnaA_bact"/>
    <property type="match status" value="1"/>
</dbReference>
<dbReference type="InterPro" id="IPR003593">
    <property type="entry name" value="AAA+_ATPase"/>
</dbReference>
<dbReference type="InterPro" id="IPR001957">
    <property type="entry name" value="Chromosome_initiator_DnaA"/>
</dbReference>
<dbReference type="InterPro" id="IPR020591">
    <property type="entry name" value="Chromosome_initiator_DnaA-like"/>
</dbReference>
<dbReference type="InterPro" id="IPR018312">
    <property type="entry name" value="Chromosome_initiator_DnaA_CS"/>
</dbReference>
<dbReference type="InterPro" id="IPR013159">
    <property type="entry name" value="DnaA_C"/>
</dbReference>
<dbReference type="InterPro" id="IPR013317">
    <property type="entry name" value="DnaA_dom"/>
</dbReference>
<dbReference type="InterPro" id="IPR038454">
    <property type="entry name" value="DnaA_N_sf"/>
</dbReference>
<dbReference type="InterPro" id="IPR027417">
    <property type="entry name" value="P-loop_NTPase"/>
</dbReference>
<dbReference type="InterPro" id="IPR010921">
    <property type="entry name" value="Trp_repressor/repl_initiator"/>
</dbReference>
<dbReference type="NCBIfam" id="NF009087">
    <property type="entry name" value="PRK12422.1"/>
    <property type="match status" value="1"/>
</dbReference>
<dbReference type="PANTHER" id="PTHR30050">
    <property type="entry name" value="CHROMOSOMAL REPLICATION INITIATOR PROTEIN DNAA"/>
    <property type="match status" value="1"/>
</dbReference>
<dbReference type="PANTHER" id="PTHR30050:SF2">
    <property type="entry name" value="CHROMOSOMAL REPLICATION INITIATOR PROTEIN DNAA"/>
    <property type="match status" value="1"/>
</dbReference>
<dbReference type="Pfam" id="PF00308">
    <property type="entry name" value="Bac_DnaA"/>
    <property type="match status" value="1"/>
</dbReference>
<dbReference type="Pfam" id="PF08299">
    <property type="entry name" value="Bac_DnaA_C"/>
    <property type="match status" value="1"/>
</dbReference>
<dbReference type="PRINTS" id="PR00051">
    <property type="entry name" value="DNAA"/>
</dbReference>
<dbReference type="SMART" id="SM00382">
    <property type="entry name" value="AAA"/>
    <property type="match status" value="1"/>
</dbReference>
<dbReference type="SMART" id="SM00760">
    <property type="entry name" value="Bac_DnaA_C"/>
    <property type="match status" value="1"/>
</dbReference>
<dbReference type="SUPFAM" id="SSF52540">
    <property type="entry name" value="P-loop containing nucleoside triphosphate hydrolases"/>
    <property type="match status" value="1"/>
</dbReference>
<dbReference type="SUPFAM" id="SSF48295">
    <property type="entry name" value="TrpR-like"/>
    <property type="match status" value="1"/>
</dbReference>
<dbReference type="PROSITE" id="PS01008">
    <property type="entry name" value="DNAA"/>
    <property type="match status" value="1"/>
</dbReference>